<keyword id="KW-0167">Capsid protein</keyword>
<keyword id="KW-1176">Cytoplasmic inwards viral transport</keyword>
<keyword id="KW-1015">Disulfide bond</keyword>
<keyword id="KW-0238">DNA-binding</keyword>
<keyword id="KW-1039">Host endosome</keyword>
<keyword id="KW-1040">Host Golgi apparatus</keyword>
<keyword id="KW-1048">Host nucleus</keyword>
<keyword id="KW-0945">Host-virus interaction</keyword>
<keyword id="KW-0426">Late protein</keyword>
<keyword id="KW-1177">Microtubular inwards viral transport</keyword>
<keyword id="KW-0597">Phosphoprotein</keyword>
<keyword id="KW-1185">Reference proteome</keyword>
<keyword id="KW-1163">Viral penetration into host nucleus</keyword>
<keyword id="KW-0946">Virion</keyword>
<keyword id="KW-1160">Virus entry into host cell</keyword>
<protein>
    <recommendedName>
        <fullName evidence="1">Minor capsid protein L2</fullName>
    </recommendedName>
</protein>
<feature type="chain" id="PRO_0000133599" description="Minor capsid protein L2">
    <location>
        <begin position="1"/>
        <end position="476"/>
    </location>
</feature>
<feature type="short sequence motif" description="Nuclear localization signal" evidence="1">
    <location>
        <begin position="1"/>
        <end position="12"/>
    </location>
</feature>
<feature type="short sequence motif" description="Nuclear localization signal" evidence="1">
    <location>
        <begin position="458"/>
        <end position="465"/>
    </location>
</feature>
<feature type="disulfide bond" evidence="1">
    <location>
        <begin position="21"/>
        <end position="27"/>
    </location>
</feature>
<comment type="function">
    <text evidence="1">Minor protein of the capsid that localizes along the inner surface of the virion, within the central cavities beneath the L1 pentamers. Plays a role in capsid stabilization through interaction with the major capsid protein L1. Once the virion enters the host cell, L2 escorts the genomic DNA into the nucleus by promoting escape from the endosomal compartments and traffic through the host Golgi network. Mechanistically, the C-terminus of L2 possesses a cell-penetrating peptide that protudes from the host endosome, interacts with host cytoplasmic retromer cargo and thereby mediates the capsid delivery to the host trans-Golgi network. Plays a role through its interaction with host dynein in the intracellular microtubule-dependent transport of viral capsid toward the nucleus. Mediates the viral genome import into the nucleus through binding to host importins. Once within the nucleus, L2 localizes viral genomes to host PML bodies in order to activate early gene expression for establishment of infection. Later on, promotes late gene expression by interacting with the viral E2 protein and by inhibiting its transcriptional activation functions. During virion assembly, encapsidates the genome by direct interaction with the viral DNA.</text>
</comment>
<comment type="subunit">
    <text evidence="1">Interacts with major capsid protein L1. Interacts with E2; this interaction inhibits E2 transcriptional activity but not the DNA replication function E2. Interacts with host GADD45GIP1. Interacts with host HSPA8; this interaction is required for L2 nuclear translocation. Interacts with host importins KPNB2 and KPNB3. Forms a complex with importin alpha2-beta1 heterodimers via interaction with the importin alpha2 adapter. Interacts with host DYNLT1; this interaction is essential for virus intracellular transport during entry. Interacts (via C-terminus) with host retromer subunits VPS35 and VPS29.</text>
</comment>
<comment type="subcellular location">
    <subcellularLocation>
        <location evidence="1">Virion</location>
    </subcellularLocation>
    <subcellularLocation>
        <location evidence="1">Host nucleus</location>
    </subcellularLocation>
    <subcellularLocation>
        <location evidence="1">Host early endosome</location>
    </subcellularLocation>
    <subcellularLocation>
        <location evidence="1">Host Golgi apparatus</location>
    </subcellularLocation>
</comment>
<comment type="PTM">
    <text evidence="1">Highly phosphorylated.</text>
</comment>
<comment type="similarity">
    <text evidence="1">Belongs to the papillomaviridae L2 protein family.</text>
</comment>
<dbReference type="EMBL" id="X74475">
    <property type="protein sequence ID" value="CAA52553.1"/>
    <property type="molecule type" value="Genomic_DNA"/>
</dbReference>
<dbReference type="PIR" id="S36513">
    <property type="entry name" value="S36513"/>
</dbReference>
<dbReference type="RefSeq" id="NP_041805.1">
    <property type="nucleotide sequence ID" value="NC_001586.1"/>
</dbReference>
<dbReference type="GeneID" id="1489427"/>
<dbReference type="KEGG" id="vg:1489427"/>
<dbReference type="OrthoDB" id="8047at10239"/>
<dbReference type="Proteomes" id="UP000009117">
    <property type="component" value="Genome"/>
</dbReference>
<dbReference type="GO" id="GO:0043657">
    <property type="term" value="C:host cell"/>
    <property type="evidence" value="ECO:0007669"/>
    <property type="project" value="GOC"/>
</dbReference>
<dbReference type="GO" id="GO:0044174">
    <property type="term" value="C:host cell endosome"/>
    <property type="evidence" value="ECO:0007669"/>
    <property type="project" value="UniProtKB-KW"/>
</dbReference>
<dbReference type="GO" id="GO:0044177">
    <property type="term" value="C:host cell Golgi apparatus"/>
    <property type="evidence" value="ECO:0007669"/>
    <property type="project" value="UniProtKB-SubCell"/>
</dbReference>
<dbReference type="GO" id="GO:0042025">
    <property type="term" value="C:host cell nucleus"/>
    <property type="evidence" value="ECO:0007669"/>
    <property type="project" value="UniProtKB-SubCell"/>
</dbReference>
<dbReference type="GO" id="GO:0019028">
    <property type="term" value="C:viral capsid"/>
    <property type="evidence" value="ECO:0007669"/>
    <property type="project" value="UniProtKB-UniRule"/>
</dbReference>
<dbReference type="GO" id="GO:0003677">
    <property type="term" value="F:DNA binding"/>
    <property type="evidence" value="ECO:0007669"/>
    <property type="project" value="UniProtKB-UniRule"/>
</dbReference>
<dbReference type="GO" id="GO:0005198">
    <property type="term" value="F:structural molecule activity"/>
    <property type="evidence" value="ECO:0007669"/>
    <property type="project" value="UniProtKB-UniRule"/>
</dbReference>
<dbReference type="GO" id="GO:0075521">
    <property type="term" value="P:microtubule-dependent intracellular transport of viral material towards nucleus"/>
    <property type="evidence" value="ECO:0007669"/>
    <property type="project" value="UniProtKB-UniRule"/>
</dbReference>
<dbReference type="GO" id="GO:0046718">
    <property type="term" value="P:symbiont entry into host cell"/>
    <property type="evidence" value="ECO:0007669"/>
    <property type="project" value="UniProtKB-KW"/>
</dbReference>
<dbReference type="GO" id="GO:0075732">
    <property type="term" value="P:viral penetration into host nucleus"/>
    <property type="evidence" value="ECO:0007669"/>
    <property type="project" value="UniProtKB-KW"/>
</dbReference>
<dbReference type="HAMAP" id="MF_04003">
    <property type="entry name" value="PPV_L2"/>
    <property type="match status" value="1"/>
</dbReference>
<dbReference type="InterPro" id="IPR000784">
    <property type="entry name" value="Late_L2"/>
</dbReference>
<dbReference type="Pfam" id="PF00513">
    <property type="entry name" value="Late_protein_L2"/>
    <property type="match status" value="1"/>
</dbReference>
<organism>
    <name type="scientific">Human papillomavirus type 32</name>
    <dbReference type="NCBI Taxonomy" id="333763"/>
    <lineage>
        <taxon>Viruses</taxon>
        <taxon>Monodnaviria</taxon>
        <taxon>Shotokuvirae</taxon>
        <taxon>Cossaviricota</taxon>
        <taxon>Papovaviricetes</taxon>
        <taxon>Zurhausenvirales</taxon>
        <taxon>Papillomaviridae</taxon>
        <taxon>Firstpapillomavirinae</taxon>
        <taxon>Alphapapillomavirus</taxon>
        <taxon>Alphapapillomavirus 1</taxon>
    </lineage>
</organism>
<organismHost>
    <name type="scientific">Homo sapiens</name>
    <name type="common">Human</name>
    <dbReference type="NCBI Taxonomy" id="9606"/>
</organismHost>
<proteinExistence type="inferred from homology"/>
<reference key="1">
    <citation type="journal article" date="1994" name="Curr. Top. Microbiol. Immunol.">
        <title>Primer-directed sequencing of human papillomavirus types.</title>
        <authorList>
            <person name="Delius H."/>
            <person name="Hofmann B."/>
        </authorList>
    </citation>
    <scope>NUCLEOTIDE SEQUENCE [GENOMIC DNA]</scope>
</reference>
<accession>P36757</accession>
<gene>
    <name evidence="1" type="primary">L2</name>
</gene>
<sequence length="476" mass="50815">MPPHRSRRRKRASATQLYQTCKASGTCPPDVIPKIEGRTWADQILKWGSTGVFFGGLGIGTGAGSGGRTGYVPIGTRPPVVAEPGPAIRPPVVVDTIGPTDPSVISLLEESAVIDSSIPVPTDTSHGGFNITSSASGPSSTPAVLDISPPTNTIRVASTTSHNPVYSDPFTLRPSLPVEGNGRLLTSHPTIAPHSYEEIPMDTFVVSTDTSNTVTSTPIPGPRPTMRLGLYTRVTQQRPVATTTFLTSPERLVTYDNPAYEGPAEGTLEFEHPTIHEAPDSDFMDIIALHRPVLSARQGTVRVSRIGQRASLQTRSGARIGSRVHFFHDISPITRPSEAIELQPLGSSSTAVSTTASSAINDGLFDVYVDPDIPPSHALPPLRSPTHVSTVSLTSLGSVPAQTANTTVPLSLPTNINVGPDLSPPESPPFISTRPVSPSFDSVMVLGWDFILHPSYMWRKRRKPVPYFFADVRVAA</sequence>
<evidence type="ECO:0000255" key="1">
    <source>
        <dbReference type="HAMAP-Rule" id="MF_04003"/>
    </source>
</evidence>
<name>VL2_HPV32</name>